<sequence>MAKLSLIQREEKREKLVAKYAKKYAELKATIDDQSKSEEERYAARLALQQLPRNAYPTRLRARCGITGRPRGTFRKFGLGRTKIRELAFRGDIPGVVKASW</sequence>
<feature type="chain" id="PRO_1000128433" description="Small ribosomal subunit protein uS14">
    <location>
        <begin position="1"/>
        <end position="101"/>
    </location>
</feature>
<proteinExistence type="inferred from homology"/>
<evidence type="ECO:0000255" key="1">
    <source>
        <dbReference type="HAMAP-Rule" id="MF_00537"/>
    </source>
</evidence>
<evidence type="ECO:0000305" key="2"/>
<comment type="function">
    <text evidence="1">Binds 16S rRNA, required for the assembly of 30S particles and may also be responsible for determining the conformation of the 16S rRNA at the A site.</text>
</comment>
<comment type="subunit">
    <text evidence="1">Part of the 30S ribosomal subunit. Contacts proteins S3 and S10.</text>
</comment>
<comment type="similarity">
    <text evidence="1">Belongs to the universal ribosomal protein uS14 family.</text>
</comment>
<keyword id="KW-1185">Reference proteome</keyword>
<keyword id="KW-0687">Ribonucleoprotein</keyword>
<keyword id="KW-0689">Ribosomal protein</keyword>
<keyword id="KW-0694">RNA-binding</keyword>
<keyword id="KW-0699">rRNA-binding</keyword>
<gene>
    <name evidence="1" type="primary">rpsN</name>
    <name type="ordered locus">Lcho_3936</name>
</gene>
<reference key="1">
    <citation type="submission" date="2008-03" db="EMBL/GenBank/DDBJ databases">
        <title>Complete sequence of Leptothrix cholodnii SP-6.</title>
        <authorList>
            <consortium name="US DOE Joint Genome Institute"/>
            <person name="Copeland A."/>
            <person name="Lucas S."/>
            <person name="Lapidus A."/>
            <person name="Glavina del Rio T."/>
            <person name="Dalin E."/>
            <person name="Tice H."/>
            <person name="Bruce D."/>
            <person name="Goodwin L."/>
            <person name="Pitluck S."/>
            <person name="Chertkov O."/>
            <person name="Brettin T."/>
            <person name="Detter J.C."/>
            <person name="Han C."/>
            <person name="Kuske C.R."/>
            <person name="Schmutz J."/>
            <person name="Larimer F."/>
            <person name="Land M."/>
            <person name="Hauser L."/>
            <person name="Kyrpides N."/>
            <person name="Lykidis A."/>
            <person name="Emerson D."/>
            <person name="Richardson P."/>
        </authorList>
    </citation>
    <scope>NUCLEOTIDE SEQUENCE [LARGE SCALE GENOMIC DNA]</scope>
    <source>
        <strain>ATCC 51168 / LMG 8142 / SP-6</strain>
    </source>
</reference>
<accession>B1Y8C4</accession>
<protein>
    <recommendedName>
        <fullName evidence="1">Small ribosomal subunit protein uS14</fullName>
    </recommendedName>
    <alternativeName>
        <fullName evidence="2">30S ribosomal protein S14</fullName>
    </alternativeName>
</protein>
<dbReference type="EMBL" id="CP001013">
    <property type="protein sequence ID" value="ACB36190.1"/>
    <property type="molecule type" value="Genomic_DNA"/>
</dbReference>
<dbReference type="RefSeq" id="WP_012348935.1">
    <property type="nucleotide sequence ID" value="NC_010524.1"/>
</dbReference>
<dbReference type="SMR" id="B1Y8C4"/>
<dbReference type="STRING" id="395495.Lcho_3936"/>
<dbReference type="KEGG" id="lch:Lcho_3936"/>
<dbReference type="eggNOG" id="COG0199">
    <property type="taxonomic scope" value="Bacteria"/>
</dbReference>
<dbReference type="HOGENOM" id="CLU_139869_0_1_4"/>
<dbReference type="OrthoDB" id="9810484at2"/>
<dbReference type="Proteomes" id="UP000001693">
    <property type="component" value="Chromosome"/>
</dbReference>
<dbReference type="GO" id="GO:0005737">
    <property type="term" value="C:cytoplasm"/>
    <property type="evidence" value="ECO:0007669"/>
    <property type="project" value="UniProtKB-ARBA"/>
</dbReference>
<dbReference type="GO" id="GO:0015935">
    <property type="term" value="C:small ribosomal subunit"/>
    <property type="evidence" value="ECO:0007669"/>
    <property type="project" value="TreeGrafter"/>
</dbReference>
<dbReference type="GO" id="GO:0019843">
    <property type="term" value="F:rRNA binding"/>
    <property type="evidence" value="ECO:0007669"/>
    <property type="project" value="UniProtKB-UniRule"/>
</dbReference>
<dbReference type="GO" id="GO:0003735">
    <property type="term" value="F:structural constituent of ribosome"/>
    <property type="evidence" value="ECO:0007669"/>
    <property type="project" value="InterPro"/>
</dbReference>
<dbReference type="GO" id="GO:0006412">
    <property type="term" value="P:translation"/>
    <property type="evidence" value="ECO:0007669"/>
    <property type="project" value="UniProtKB-UniRule"/>
</dbReference>
<dbReference type="FunFam" id="1.10.287.1480:FF:000001">
    <property type="entry name" value="30S ribosomal protein S14"/>
    <property type="match status" value="1"/>
</dbReference>
<dbReference type="Gene3D" id="1.10.287.1480">
    <property type="match status" value="1"/>
</dbReference>
<dbReference type="HAMAP" id="MF_00537">
    <property type="entry name" value="Ribosomal_uS14_1"/>
    <property type="match status" value="1"/>
</dbReference>
<dbReference type="InterPro" id="IPR001209">
    <property type="entry name" value="Ribosomal_uS14"/>
</dbReference>
<dbReference type="InterPro" id="IPR023036">
    <property type="entry name" value="Ribosomal_uS14_bac/plastid"/>
</dbReference>
<dbReference type="NCBIfam" id="NF006477">
    <property type="entry name" value="PRK08881.1"/>
    <property type="match status" value="1"/>
</dbReference>
<dbReference type="PANTHER" id="PTHR19836">
    <property type="entry name" value="30S RIBOSOMAL PROTEIN S14"/>
    <property type="match status" value="1"/>
</dbReference>
<dbReference type="PANTHER" id="PTHR19836:SF19">
    <property type="entry name" value="SMALL RIBOSOMAL SUBUNIT PROTEIN US14M"/>
    <property type="match status" value="1"/>
</dbReference>
<dbReference type="Pfam" id="PF00253">
    <property type="entry name" value="Ribosomal_S14"/>
    <property type="match status" value="1"/>
</dbReference>
<dbReference type="SUPFAM" id="SSF57716">
    <property type="entry name" value="Glucocorticoid receptor-like (DNA-binding domain)"/>
    <property type="match status" value="1"/>
</dbReference>
<name>RS14_LEPCP</name>
<organism>
    <name type="scientific">Leptothrix cholodnii (strain ATCC 51168 / LMG 8142 / SP-6)</name>
    <name type="common">Leptothrix discophora (strain SP-6)</name>
    <dbReference type="NCBI Taxonomy" id="395495"/>
    <lineage>
        <taxon>Bacteria</taxon>
        <taxon>Pseudomonadati</taxon>
        <taxon>Pseudomonadota</taxon>
        <taxon>Betaproteobacteria</taxon>
        <taxon>Burkholderiales</taxon>
        <taxon>Sphaerotilaceae</taxon>
        <taxon>Leptothrix</taxon>
    </lineage>
</organism>